<organism>
    <name type="scientific">Chinchilla lanigera</name>
    <name type="common">Long-tailed chinchilla</name>
    <name type="synonym">Chinchilla villidera</name>
    <dbReference type="NCBI Taxonomy" id="34839"/>
    <lineage>
        <taxon>Eukaryota</taxon>
        <taxon>Metazoa</taxon>
        <taxon>Chordata</taxon>
        <taxon>Craniata</taxon>
        <taxon>Vertebrata</taxon>
        <taxon>Euteleostomi</taxon>
        <taxon>Mammalia</taxon>
        <taxon>Eutheria</taxon>
        <taxon>Euarchontoglires</taxon>
        <taxon>Glires</taxon>
        <taxon>Rodentia</taxon>
        <taxon>Hystricomorpha</taxon>
        <taxon>Chinchillidae</taxon>
        <taxon>Chinchilla</taxon>
    </lineage>
</organism>
<feature type="chain" id="PRO_0000094091" description="Alpha-1-antiproteinase">
    <location>
        <begin position="1"/>
        <end position="30" status="greater than"/>
    </location>
</feature>
<feature type="non-terminal residue">
    <location>
        <position position="30"/>
    </location>
</feature>
<sequence>EDAQVTDLPDHEQEHLAXHKIAPXLAEFAY</sequence>
<protein>
    <recommendedName>
        <fullName>Alpha-1-antiproteinase</fullName>
    </recommendedName>
    <alternativeName>
        <fullName>Alpha-1-antitrypsin</fullName>
    </alternativeName>
    <alternativeName>
        <fullName>Alpha-1-proteinase inhibitor</fullName>
    </alternativeName>
</protein>
<reference key="1">
    <citation type="journal article" date="1990" name="Comp. Biochem. Physiol.">
        <title>Purification and N-terminal characterization of Chinchilla villidera alpha-1-antitrypsin.</title>
        <authorList>
            <person name="Diven W.F."/>
            <person name="Vietmeier B."/>
            <person name="Hempel J."/>
            <person name="Chambers J."/>
        </authorList>
    </citation>
    <scope>PROTEIN SEQUENCE</scope>
    <source>
        <tissue>Plasma</tissue>
    </source>
</reference>
<name>A1AT_CHILA</name>
<dbReference type="Proteomes" id="UP000694398">
    <property type="component" value="Unplaced"/>
</dbReference>
<dbReference type="GO" id="GO:0005576">
    <property type="term" value="C:extracellular region"/>
    <property type="evidence" value="ECO:0007669"/>
    <property type="project" value="UniProtKB-SubCell"/>
</dbReference>
<dbReference type="GO" id="GO:0004867">
    <property type="term" value="F:serine-type endopeptidase inhibitor activity"/>
    <property type="evidence" value="ECO:0007669"/>
    <property type="project" value="UniProtKB-KW"/>
</dbReference>
<dbReference type="GO" id="GO:0006953">
    <property type="term" value="P:acute-phase response"/>
    <property type="evidence" value="ECO:0007669"/>
    <property type="project" value="UniProtKB-KW"/>
</dbReference>
<proteinExistence type="evidence at protein level"/>
<accession>P38026</accession>
<keyword id="KW-0011">Acute phase</keyword>
<keyword id="KW-0903">Direct protein sequencing</keyword>
<keyword id="KW-0325">Glycoprotein</keyword>
<keyword id="KW-0646">Protease inhibitor</keyword>
<keyword id="KW-1185">Reference proteome</keyword>
<keyword id="KW-0964">Secreted</keyword>
<keyword id="KW-0722">Serine protease inhibitor</keyword>
<evidence type="ECO:0000250" key="1"/>
<evidence type="ECO:0000305" key="2"/>
<comment type="subcellular location">
    <subcellularLocation>
        <location>Secreted</location>
    </subcellularLocation>
</comment>
<comment type="tissue specificity">
    <text>Plasma.</text>
</comment>
<comment type="domain">
    <text evidence="1">The reactive center loop (RCL) extends out from the body of the protein and directs binding to the target protease. The protease cleaves the serpin at the reactive site within the RCL, establishing a covalent linkage between the carboxyl group of the serpin reactive site and the serine hydroxyl of the protease. The resulting inactive serpin-protease complex is highly stable (By similarity).</text>
</comment>
<comment type="PTM">
    <text>N-glycosylated; contains bi- and triantennary glycans.</text>
</comment>
<comment type="similarity">
    <text evidence="2">Belongs to the serpin family.</text>
</comment>